<name>SLYA_PECCC</name>
<sequence length="145" mass="16417">MELPLGSDLARLVRVWRALVDHRLKPLELTQTHWVTLHNIYHLPPGQSQIQLAKAIGIEQPSLVRTLDQLEEKGLITRHVCAHDRRAKRIMLTESAEPIIQAVNGVISHTRSEVLFGITPEQVDELALLVSRLEKNILALHENQA</sequence>
<reference key="1">
    <citation type="journal article" date="1997" name="Mol. Microbiol.">
        <title>The rap and hor proteins of Erwinia, Serratia and Yersinia: a novel subgroup in a growing superfamily of proteins regulating diverse physiological processes in bacterial pathogens.</title>
        <authorList>
            <person name="Thomson N.R."/>
            <person name="Cox A."/>
            <person name="Bycroft B.W."/>
            <person name="Stewart G.S.A.B."/>
            <person name="Williams P."/>
            <person name="Salmond G.P.C."/>
        </authorList>
    </citation>
    <scope>NUCLEOTIDE SEQUENCE [GENOMIC DNA]</scope>
    <scope>FUNCTION</scope>
    <scope>DISRUPTION PHENOTYPE</scope>
    <source>
        <strain>ATCC 39048 / GS101 / SC 12</strain>
    </source>
</reference>
<reference key="2">
    <citation type="journal article" date="2003" name="EMBO Rep.">
        <title>A single gene that promotes interaction of a phytopathogenic bacterium with its insect vector, Drosophila melanogaster.</title>
        <authorList>
            <person name="Basset A."/>
            <person name="Tzou P."/>
            <person name="Lemaitre B."/>
            <person name="Boccard F."/>
        </authorList>
    </citation>
    <scope>FUNCTION</scope>
</reference>
<evidence type="ECO:0000255" key="1">
    <source>
        <dbReference type="HAMAP-Rule" id="MF_01819"/>
    </source>
</evidence>
<evidence type="ECO:0000269" key="2">
    <source>
    </source>
</evidence>
<evidence type="ECO:0000269" key="3">
    <source>
    </source>
</evidence>
<evidence type="ECO:0000303" key="4">
    <source>
    </source>
</evidence>
<evidence type="ECO:0000305" key="5">
    <source>
    </source>
</evidence>
<dbReference type="EMBL" id="AF168687">
    <property type="protein sequence ID" value="AAD50820.1"/>
    <property type="molecule type" value="Genomic_DNA"/>
</dbReference>
<dbReference type="RefSeq" id="WP_010276609.1">
    <property type="nucleotide sequence ID" value="NZ_VBUA01000006.1"/>
</dbReference>
<dbReference type="SMR" id="Q9RB09"/>
<dbReference type="GeneID" id="93390589"/>
<dbReference type="GO" id="GO:0003677">
    <property type="term" value="F:DNA binding"/>
    <property type="evidence" value="ECO:0007669"/>
    <property type="project" value="UniProtKB-UniRule"/>
</dbReference>
<dbReference type="GO" id="GO:0003700">
    <property type="term" value="F:DNA-binding transcription factor activity"/>
    <property type="evidence" value="ECO:0007669"/>
    <property type="project" value="UniProtKB-UniRule"/>
</dbReference>
<dbReference type="GO" id="GO:0017000">
    <property type="term" value="P:antibiotic biosynthetic process"/>
    <property type="evidence" value="ECO:0007669"/>
    <property type="project" value="UniProtKB-KW"/>
</dbReference>
<dbReference type="GO" id="GO:0006950">
    <property type="term" value="P:response to stress"/>
    <property type="evidence" value="ECO:0007669"/>
    <property type="project" value="TreeGrafter"/>
</dbReference>
<dbReference type="Gene3D" id="1.10.10.10">
    <property type="entry name" value="Winged helix-like DNA-binding domain superfamily/Winged helix DNA-binding domain"/>
    <property type="match status" value="1"/>
</dbReference>
<dbReference type="HAMAP" id="MF_01819">
    <property type="entry name" value="HTH_type_SlyA"/>
    <property type="match status" value="1"/>
</dbReference>
<dbReference type="InterPro" id="IPR000835">
    <property type="entry name" value="HTH_MarR-typ"/>
</dbReference>
<dbReference type="InterPro" id="IPR039422">
    <property type="entry name" value="MarR/SlyA-like"/>
</dbReference>
<dbReference type="InterPro" id="IPR023187">
    <property type="entry name" value="Tscrpt_reg_MarR-type_CS"/>
</dbReference>
<dbReference type="InterPro" id="IPR023071">
    <property type="entry name" value="Tscrpt_reg_SlyA"/>
</dbReference>
<dbReference type="InterPro" id="IPR036388">
    <property type="entry name" value="WH-like_DNA-bd_sf"/>
</dbReference>
<dbReference type="InterPro" id="IPR036390">
    <property type="entry name" value="WH_DNA-bd_sf"/>
</dbReference>
<dbReference type="NCBIfam" id="NF002926">
    <property type="entry name" value="PRK03573.1"/>
    <property type="match status" value="1"/>
</dbReference>
<dbReference type="PANTHER" id="PTHR33164:SF64">
    <property type="entry name" value="TRANSCRIPTIONAL REGULATOR SLYA"/>
    <property type="match status" value="1"/>
</dbReference>
<dbReference type="PANTHER" id="PTHR33164">
    <property type="entry name" value="TRANSCRIPTIONAL REGULATOR, MARR FAMILY"/>
    <property type="match status" value="1"/>
</dbReference>
<dbReference type="Pfam" id="PF01047">
    <property type="entry name" value="MarR"/>
    <property type="match status" value="1"/>
</dbReference>
<dbReference type="PRINTS" id="PR00598">
    <property type="entry name" value="HTHMARR"/>
</dbReference>
<dbReference type="SMART" id="SM00347">
    <property type="entry name" value="HTH_MARR"/>
    <property type="match status" value="1"/>
</dbReference>
<dbReference type="SUPFAM" id="SSF46785">
    <property type="entry name" value="Winged helix' DNA-binding domain"/>
    <property type="match status" value="1"/>
</dbReference>
<dbReference type="PROSITE" id="PS01117">
    <property type="entry name" value="HTH_MARR_1"/>
    <property type="match status" value="1"/>
</dbReference>
<dbReference type="PROSITE" id="PS50995">
    <property type="entry name" value="HTH_MARR_2"/>
    <property type="match status" value="1"/>
</dbReference>
<gene>
    <name evidence="1" type="primary">slyA</name>
    <name evidence="4" type="synonym">hor</name>
</gene>
<protein>
    <recommendedName>
        <fullName evidence="1">Transcriptional regulator SlyA</fullName>
    </recommendedName>
    <alternativeName>
        <fullName evidence="4">Homolog of Rap</fullName>
        <shortName evidence="4">Hor-Er</shortName>
    </alternativeName>
</protein>
<proteinExistence type="inferred from homology"/>
<keyword id="KW-0010">Activator</keyword>
<keyword id="KW-0045">Antibiotic biosynthesis</keyword>
<keyword id="KW-0238">DNA-binding</keyword>
<keyword id="KW-0678">Repressor</keyword>
<keyword id="KW-0804">Transcription</keyword>
<keyword id="KW-0805">Transcription regulation</keyword>
<keyword id="KW-0843">Virulence</keyword>
<accession>Q9RB09</accession>
<organism>
    <name type="scientific">Pectobacterium carotovorum subsp. carotovorum</name>
    <name type="common">Erwinia carotovora subsp. carotovora</name>
    <dbReference type="NCBI Taxonomy" id="555"/>
    <lineage>
        <taxon>Bacteria</taxon>
        <taxon>Pseudomonadati</taxon>
        <taxon>Pseudomonadota</taxon>
        <taxon>Gammaproteobacteria</taxon>
        <taxon>Enterobacterales</taxon>
        <taxon>Pectobacteriaceae</taxon>
        <taxon>Pectobacterium</taxon>
    </lineage>
</organism>
<feature type="chain" id="PRO_0000054388" description="Transcriptional regulator SlyA">
    <location>
        <begin position="1"/>
        <end position="145"/>
    </location>
</feature>
<feature type="domain" description="HTH marR-type" evidence="1">
    <location>
        <begin position="2"/>
        <end position="135"/>
    </location>
</feature>
<feature type="DNA-binding region" description="H-T-H motif" evidence="1">
    <location>
        <begin position="49"/>
        <end position="72"/>
    </location>
</feature>
<comment type="function">
    <text evidence="1 2 5">Transcription regulator that can specifically activate or repress expression of target genes (By similarity). Regulates genes involved in production of antibiotic and exoenzyme virulence determinants in the phytopathogen (PubMed:9402023). Required for the expression of the virulence protein evf during Drosophila melanogaster infection (PubMed:12612613).</text>
</comment>
<comment type="subunit">
    <text evidence="1">Homodimer.</text>
</comment>
<comment type="disruption phenotype">
    <text evidence="3">Pleiotropic, with decreased production of exoenzymes such as pectate lyase (Pel), cellulase and protease Prt. Has a 50% decrease in potato macerationafter 96 hours. Dramatically reduces transcription of carA, the antibiotic carbapenem biosynthetic gene.</text>
</comment>
<comment type="similarity">
    <text evidence="1">Belongs to the SlyA family.</text>
</comment>